<sequence length="261" mass="28308">MAETTEPPSDAGTSQADAMALAAEAEAAEAEALAAAARARARAARLKREALAMAPAEDENVPEEYADWEDAEDYDDYDDYEAADQEAARSASWRRRLRVRLPRLSTIAMAAAVVIICGFTGLSGYIVWQHHEATERQQRAAAFAAGAKQGVINMTSLDFNKAKEDVARVIDSSTGEFRDDFQQRAADFTKVVEQSKVVTEGTVNATAVESMNEHSAVVLVAATSRVTNSAGAKDEPRAWRLKVTVTEEGGQYKMSKVEFVP</sequence>
<comment type="subcellular location">
    <subcellularLocation>
        <location evidence="3">Membrane</location>
        <topology evidence="3">Single-pass membrane protein</topology>
    </subcellularLocation>
</comment>
<comment type="similarity">
    <text evidence="3">To M.tuberculosis Rv1362c.</text>
</comment>
<keyword id="KW-0472">Membrane</keyword>
<keyword id="KW-1185">Reference proteome</keyword>
<keyword id="KW-0812">Transmembrane</keyword>
<keyword id="KW-1133">Transmembrane helix</keyword>
<gene>
    <name type="ordered locus">Rv1363c</name>
    <name type="ORF">MTCY02B10.27c</name>
</gene>
<organism>
    <name type="scientific">Mycobacterium tuberculosis (strain ATCC 25618 / H37Rv)</name>
    <dbReference type="NCBI Taxonomy" id="83332"/>
    <lineage>
        <taxon>Bacteria</taxon>
        <taxon>Bacillati</taxon>
        <taxon>Actinomycetota</taxon>
        <taxon>Actinomycetes</taxon>
        <taxon>Mycobacteriales</taxon>
        <taxon>Mycobacteriaceae</taxon>
        <taxon>Mycobacterium</taxon>
        <taxon>Mycobacterium tuberculosis complex</taxon>
    </lineage>
</organism>
<name>Y1363_MYCTU</name>
<accession>P9WLZ9</accession>
<accession>L0T6F2</accession>
<accession>Q11033</accession>
<proteinExistence type="evidence at protein level"/>
<dbReference type="EMBL" id="AL123456">
    <property type="protein sequence ID" value="CCP44121.1"/>
    <property type="molecule type" value="Genomic_DNA"/>
</dbReference>
<dbReference type="PIR" id="B70742">
    <property type="entry name" value="B70742"/>
</dbReference>
<dbReference type="RefSeq" id="NP_215879.1">
    <property type="nucleotide sequence ID" value="NC_000962.3"/>
</dbReference>
<dbReference type="RefSeq" id="WP_003407157.1">
    <property type="nucleotide sequence ID" value="NZ_NVQJ01000031.1"/>
</dbReference>
<dbReference type="SMR" id="P9WLZ9"/>
<dbReference type="STRING" id="83332.Rv1363c"/>
<dbReference type="PaxDb" id="83332-Rv1363c"/>
<dbReference type="DNASU" id="886811"/>
<dbReference type="GeneID" id="886811"/>
<dbReference type="KEGG" id="mtu:Rv1363c"/>
<dbReference type="KEGG" id="mtv:RVBD_1363c"/>
<dbReference type="TubercuList" id="Rv1363c"/>
<dbReference type="eggNOG" id="ENOG50343EN">
    <property type="taxonomic scope" value="Bacteria"/>
</dbReference>
<dbReference type="InParanoid" id="P9WLZ9"/>
<dbReference type="OrthoDB" id="4774723at2"/>
<dbReference type="PhylomeDB" id="P9WLZ9"/>
<dbReference type="Proteomes" id="UP000001584">
    <property type="component" value="Chromosome"/>
</dbReference>
<dbReference type="GO" id="GO:0016020">
    <property type="term" value="C:membrane"/>
    <property type="evidence" value="ECO:0007669"/>
    <property type="project" value="UniProtKB-SubCell"/>
</dbReference>
<dbReference type="PANTHER" id="PTHR37042">
    <property type="entry name" value="OUTER MEMBRANE PROTEIN RV1973"/>
    <property type="match status" value="1"/>
</dbReference>
<dbReference type="PANTHER" id="PTHR37042:SF4">
    <property type="entry name" value="OUTER MEMBRANE PROTEIN RV1973"/>
    <property type="match status" value="1"/>
</dbReference>
<evidence type="ECO:0000255" key="1"/>
<evidence type="ECO:0000256" key="2">
    <source>
        <dbReference type="SAM" id="MobiDB-lite"/>
    </source>
</evidence>
<evidence type="ECO:0000305" key="3"/>
<protein>
    <recommendedName>
        <fullName>Uncharacterized protein Rv1363c</fullName>
    </recommendedName>
</protein>
<feature type="chain" id="PRO_0000103832" description="Uncharacterized protein Rv1363c">
    <location>
        <begin position="1"/>
        <end position="261"/>
    </location>
</feature>
<feature type="transmembrane region" description="Helical" evidence="1">
    <location>
        <begin position="107"/>
        <end position="127"/>
    </location>
</feature>
<feature type="region of interest" description="Disordered" evidence="2">
    <location>
        <begin position="1"/>
        <end position="22"/>
    </location>
</feature>
<reference key="1">
    <citation type="journal article" date="1998" name="Nature">
        <title>Deciphering the biology of Mycobacterium tuberculosis from the complete genome sequence.</title>
        <authorList>
            <person name="Cole S.T."/>
            <person name="Brosch R."/>
            <person name="Parkhill J."/>
            <person name="Garnier T."/>
            <person name="Churcher C.M."/>
            <person name="Harris D.E."/>
            <person name="Gordon S.V."/>
            <person name="Eiglmeier K."/>
            <person name="Gas S."/>
            <person name="Barry C.E. III"/>
            <person name="Tekaia F."/>
            <person name="Badcock K."/>
            <person name="Basham D."/>
            <person name="Brown D."/>
            <person name="Chillingworth T."/>
            <person name="Connor R."/>
            <person name="Davies R.M."/>
            <person name="Devlin K."/>
            <person name="Feltwell T."/>
            <person name="Gentles S."/>
            <person name="Hamlin N."/>
            <person name="Holroyd S."/>
            <person name="Hornsby T."/>
            <person name="Jagels K."/>
            <person name="Krogh A."/>
            <person name="McLean J."/>
            <person name="Moule S."/>
            <person name="Murphy L.D."/>
            <person name="Oliver S."/>
            <person name="Osborne J."/>
            <person name="Quail M.A."/>
            <person name="Rajandream M.A."/>
            <person name="Rogers J."/>
            <person name="Rutter S."/>
            <person name="Seeger K."/>
            <person name="Skelton S."/>
            <person name="Squares S."/>
            <person name="Squares R."/>
            <person name="Sulston J.E."/>
            <person name="Taylor K."/>
            <person name="Whitehead S."/>
            <person name="Barrell B.G."/>
        </authorList>
    </citation>
    <scope>NUCLEOTIDE SEQUENCE [LARGE SCALE GENOMIC DNA]</scope>
    <source>
        <strain>ATCC 25618 / H37Rv</strain>
    </source>
</reference>
<reference key="2">
    <citation type="journal article" date="2011" name="Mol. Cell. Proteomics">
        <title>Proteogenomic analysis of Mycobacterium tuberculosis by high resolution mass spectrometry.</title>
        <authorList>
            <person name="Kelkar D.S."/>
            <person name="Kumar D."/>
            <person name="Kumar P."/>
            <person name="Balakrishnan L."/>
            <person name="Muthusamy B."/>
            <person name="Yadav A.K."/>
            <person name="Shrivastava P."/>
            <person name="Marimuthu A."/>
            <person name="Anand S."/>
            <person name="Sundaram H."/>
            <person name="Kingsbury R."/>
            <person name="Harsha H.C."/>
            <person name="Nair B."/>
            <person name="Prasad T.S."/>
            <person name="Chauhan D.S."/>
            <person name="Katoch K."/>
            <person name="Katoch V.M."/>
            <person name="Kumar P."/>
            <person name="Chaerkady R."/>
            <person name="Ramachandran S."/>
            <person name="Dash D."/>
            <person name="Pandey A."/>
        </authorList>
    </citation>
    <scope>IDENTIFICATION BY MASS SPECTROMETRY [LARGE SCALE ANALYSIS]</scope>
    <source>
        <strain>ATCC 25618 / H37Rv</strain>
    </source>
</reference>